<evidence type="ECO:0000250" key="1"/>
<evidence type="ECO:0000250" key="2">
    <source>
        <dbReference type="UniProtKB" id="Q9USM3"/>
    </source>
</evidence>
<evidence type="ECO:0000256" key="3">
    <source>
        <dbReference type="SAM" id="MobiDB-lite"/>
    </source>
</evidence>
<evidence type="ECO:0000305" key="4"/>
<keyword id="KW-0131">Cell cycle</keyword>
<keyword id="KW-0156">Chromatin regulator</keyword>
<keyword id="KW-0539">Nucleus</keyword>
<keyword id="KW-1185">Reference proteome</keyword>
<keyword id="KW-0804">Transcription</keyword>
<keyword id="KW-0805">Transcription regulation</keyword>
<protein>
    <recommendedName>
        <fullName>Chromatin structure-remodeling complex subunit SFH1</fullName>
    </recommendedName>
    <alternativeName>
        <fullName>RSC complex subunit SFH1</fullName>
    </alternativeName>
    <alternativeName>
        <fullName>SNF5 homolog 1</fullName>
    </alternativeName>
</protein>
<accession>Q754R8</accession>
<feature type="chain" id="PRO_0000205957" description="Chromatin structure-remodeling complex subunit SFH1">
    <location>
        <begin position="1"/>
        <end position="383"/>
    </location>
</feature>
<feature type="region of interest" description="Disordered" evidence="3">
    <location>
        <begin position="61"/>
        <end position="80"/>
    </location>
</feature>
<feature type="compositionally biased region" description="Basic and acidic residues" evidence="3">
    <location>
        <begin position="64"/>
        <end position="80"/>
    </location>
</feature>
<sequence length="383" mass="43707">MSQLLPQAYLTNFHNRIRNEDVPLFITAAPTRNHKRAKVVNYSEYDNDLLLDDFIEQDQNDDDEKVHSDNGKGEGEEVGHEDAVASNNNLPDLEQQDDPTGILRYPRIRETFLQSKIAVRYEQVLEAGVGGSGEAVGIAEDEGAGAYSSSSQPVVIPIRLNLEHNGHKIIDFFTWNLNDHSLTLEQFAQIYCQDLDFAHNLSLQNQIVAAINDQLQEYETLASVVVPDLHVIINLTCNLDSKLYEDNFEWNLNDQTLSPEQFAELVVQDLGLTREFMPAIAHALYESILKIKKDWLEGHLNPEHVANGAAFGCLSGIRLDIDTLGSNWCPKVEVLSQWEIEKREIEKERNMRRLKRESAKVDDRLARRRGKRRMDDLETTMRI</sequence>
<proteinExistence type="inferred from homology"/>
<organism>
    <name type="scientific">Eremothecium gossypii (strain ATCC 10895 / CBS 109.51 / FGSC 9923 / NRRL Y-1056)</name>
    <name type="common">Yeast</name>
    <name type="synonym">Ashbya gossypii</name>
    <dbReference type="NCBI Taxonomy" id="284811"/>
    <lineage>
        <taxon>Eukaryota</taxon>
        <taxon>Fungi</taxon>
        <taxon>Dikarya</taxon>
        <taxon>Ascomycota</taxon>
        <taxon>Saccharomycotina</taxon>
        <taxon>Saccharomycetes</taxon>
        <taxon>Saccharomycetales</taxon>
        <taxon>Saccharomycetaceae</taxon>
        <taxon>Eremothecium</taxon>
    </lineage>
</organism>
<name>SFH1_EREGS</name>
<dbReference type="EMBL" id="AE016819">
    <property type="protein sequence ID" value="AAS53375.1"/>
    <property type="molecule type" value="Genomic_DNA"/>
</dbReference>
<dbReference type="RefSeq" id="NP_985551.1">
    <property type="nucleotide sequence ID" value="NM_210905.1"/>
</dbReference>
<dbReference type="SMR" id="Q754R8"/>
<dbReference type="FunCoup" id="Q754R8">
    <property type="interactions" value="260"/>
</dbReference>
<dbReference type="STRING" id="284811.Q754R8"/>
<dbReference type="EnsemblFungi" id="AAS53375">
    <property type="protein sequence ID" value="AAS53375"/>
    <property type="gene ID" value="AGOS_AFR004W"/>
</dbReference>
<dbReference type="GeneID" id="4621790"/>
<dbReference type="KEGG" id="ago:AGOS_AFR004W"/>
<dbReference type="eggNOG" id="KOG1649">
    <property type="taxonomic scope" value="Eukaryota"/>
</dbReference>
<dbReference type="HOGENOM" id="CLU_014421_4_0_1"/>
<dbReference type="InParanoid" id="Q754R8"/>
<dbReference type="OMA" id="NFHNRIR"/>
<dbReference type="OrthoDB" id="10258327at2759"/>
<dbReference type="Proteomes" id="UP000000591">
    <property type="component" value="Chromosome VI"/>
</dbReference>
<dbReference type="GO" id="GO:0000228">
    <property type="term" value="C:nuclear chromosome"/>
    <property type="evidence" value="ECO:0007669"/>
    <property type="project" value="InterPro"/>
</dbReference>
<dbReference type="GO" id="GO:0005634">
    <property type="term" value="C:nucleus"/>
    <property type="evidence" value="ECO:0000318"/>
    <property type="project" value="GO_Central"/>
</dbReference>
<dbReference type="GO" id="GO:0016586">
    <property type="term" value="C:RSC-type complex"/>
    <property type="evidence" value="ECO:0000318"/>
    <property type="project" value="GO_Central"/>
</dbReference>
<dbReference type="GO" id="GO:0031491">
    <property type="term" value="F:nucleosome binding"/>
    <property type="evidence" value="ECO:0007669"/>
    <property type="project" value="EnsemblFungi"/>
</dbReference>
<dbReference type="GO" id="GO:0003712">
    <property type="term" value="F:transcription coregulator activity"/>
    <property type="evidence" value="ECO:0000318"/>
    <property type="project" value="GO_Central"/>
</dbReference>
<dbReference type="GO" id="GO:0006338">
    <property type="term" value="P:chromatin remodeling"/>
    <property type="evidence" value="ECO:0000318"/>
    <property type="project" value="GO_Central"/>
</dbReference>
<dbReference type="GO" id="GO:0031055">
    <property type="term" value="P:chromatin remodeling at centromere"/>
    <property type="evidence" value="ECO:0007669"/>
    <property type="project" value="EnsemblFungi"/>
</dbReference>
<dbReference type="GO" id="GO:0007059">
    <property type="term" value="P:chromosome segregation"/>
    <property type="evidence" value="ECO:0007669"/>
    <property type="project" value="EnsemblFungi"/>
</dbReference>
<dbReference type="GO" id="GO:0006302">
    <property type="term" value="P:double-strand break repair"/>
    <property type="evidence" value="ECO:0007669"/>
    <property type="project" value="EnsemblFungi"/>
</dbReference>
<dbReference type="GO" id="GO:0000086">
    <property type="term" value="P:G2/M transition of mitotic cell cycle"/>
    <property type="evidence" value="ECO:0007669"/>
    <property type="project" value="EnsemblFungi"/>
</dbReference>
<dbReference type="GO" id="GO:0006337">
    <property type="term" value="P:nucleosome disassembly"/>
    <property type="evidence" value="ECO:0007669"/>
    <property type="project" value="EnsemblFungi"/>
</dbReference>
<dbReference type="GO" id="GO:0033262">
    <property type="term" value="P:regulation of nuclear cell cycle DNA replication"/>
    <property type="evidence" value="ECO:0007669"/>
    <property type="project" value="EnsemblFungi"/>
</dbReference>
<dbReference type="GO" id="GO:0006357">
    <property type="term" value="P:regulation of transcription by RNA polymerase II"/>
    <property type="evidence" value="ECO:0000318"/>
    <property type="project" value="GO_Central"/>
</dbReference>
<dbReference type="GO" id="GO:0006368">
    <property type="term" value="P:transcription elongation by RNA polymerase II"/>
    <property type="evidence" value="ECO:0007669"/>
    <property type="project" value="EnsemblFungi"/>
</dbReference>
<dbReference type="InterPro" id="IPR017393">
    <property type="entry name" value="Sfh1/SNF5"/>
</dbReference>
<dbReference type="InterPro" id="IPR006939">
    <property type="entry name" value="SNF5"/>
</dbReference>
<dbReference type="PANTHER" id="PTHR10019">
    <property type="entry name" value="SNF5"/>
    <property type="match status" value="1"/>
</dbReference>
<dbReference type="Pfam" id="PF04855">
    <property type="entry name" value="SNF5"/>
    <property type="match status" value="1"/>
</dbReference>
<dbReference type="PIRSF" id="PIRSF038126">
    <property type="entry name" value="SWI_SNF"/>
    <property type="match status" value="1"/>
</dbReference>
<comment type="function">
    <text evidence="1">Part of the chromatin structure-remodeling complex (RSC) which is involved in transcription regulation and nucleosome positioning. RSC is responsible for the transfer of a histone octamer from a nucleosome core particle to naked DNA. The reaction requires ATP and involves an activated RSC-nucleosome intermediate. Remodeling reaction also involves DNA translocation, DNA twist and conformational change. As a reconfigurer of centromeric and flanking nucleosomes, RSC complex is required both for proper kinetochore function in chromosome segregation and, via a PKC1-dependent signaling pathway, for organization of the cellular cytoskeleton. This subunit is essential for mitotic growth and required for cell cycle progression (By similarity).</text>
</comment>
<comment type="subcellular location">
    <subcellularLocation>
        <location evidence="2">Nucleus</location>
    </subcellularLocation>
</comment>
<comment type="similarity">
    <text evidence="4">Belongs to the SNF5 family.</text>
</comment>
<gene>
    <name type="primary">SFH1</name>
    <name type="ordered locus">AFR004W</name>
</gene>
<reference key="1">
    <citation type="journal article" date="2004" name="Science">
        <title>The Ashbya gossypii genome as a tool for mapping the ancient Saccharomyces cerevisiae genome.</title>
        <authorList>
            <person name="Dietrich F.S."/>
            <person name="Voegeli S."/>
            <person name="Brachat S."/>
            <person name="Lerch A."/>
            <person name="Gates K."/>
            <person name="Steiner S."/>
            <person name="Mohr C."/>
            <person name="Poehlmann R."/>
            <person name="Luedi P."/>
            <person name="Choi S."/>
            <person name="Wing R.A."/>
            <person name="Flavier A."/>
            <person name="Gaffney T.D."/>
            <person name="Philippsen P."/>
        </authorList>
    </citation>
    <scope>NUCLEOTIDE SEQUENCE [LARGE SCALE GENOMIC DNA]</scope>
    <source>
        <strain>ATCC 10895 / CBS 109.51 / FGSC 9923 / NRRL Y-1056</strain>
    </source>
</reference>
<reference key="2">
    <citation type="journal article" date="2013" name="G3 (Bethesda)">
        <title>Genomes of Ashbya fungi isolated from insects reveal four mating-type loci, numerous translocations, lack of transposons, and distinct gene duplications.</title>
        <authorList>
            <person name="Dietrich F.S."/>
            <person name="Voegeli S."/>
            <person name="Kuo S."/>
            <person name="Philippsen P."/>
        </authorList>
    </citation>
    <scope>GENOME REANNOTATION</scope>
    <source>
        <strain>ATCC 10895 / CBS 109.51 / FGSC 9923 / NRRL Y-1056</strain>
    </source>
</reference>